<evidence type="ECO:0000250" key="1">
    <source>
        <dbReference type="UniProtKB" id="O48814"/>
    </source>
</evidence>
<evidence type="ECO:0000250" key="2">
    <source>
        <dbReference type="UniProtKB" id="Q9FE20"/>
    </source>
</evidence>
<evidence type="ECO:0000255" key="3">
    <source>
        <dbReference type="PROSITE-ProRule" id="PRU00159"/>
    </source>
</evidence>
<evidence type="ECO:0000256" key="4">
    <source>
        <dbReference type="SAM" id="MobiDB-lite"/>
    </source>
</evidence>
<evidence type="ECO:0000303" key="5">
    <source>
    </source>
</evidence>
<evidence type="ECO:0000305" key="6"/>
<evidence type="ECO:0000312" key="7">
    <source>
        <dbReference type="Araport" id="AT2G07180"/>
    </source>
</evidence>
<gene>
    <name evidence="5" type="primary">PBL17</name>
    <name evidence="7" type="ordered locus">At2g07180</name>
</gene>
<sequence length="442" mass="49205">MGICFSAEDQHYQFSQQQNYPKKTTPGKKAAVYLMKSDCEDVVGKVSGSGSGGGGLPLAPKNIKDLQSNPGYENVDIFTYEEMKIATKQFRPDYILGEGGFGVVYKGVIDESVRVGFKSTKVAIKELNPEGFQGDREWLAEVNYLGQLSHPNLVKLIGYCCEDDHRLLVYEYMAMGSLEKHLFRRVGCTLTWTKRMKIALDAAKGLAFLHGAERSIIYRDLKTANILLDEGYNAKLSDFGLAKDGPRGDQTHVSTRVMGTYGYAAPEYVMTGHLTSRSDVYGFGVLLLEMLLGKRAMDKSRACREHNLVEWARPLLNHNKKLLRIIDPRMDGQYGTKALMKVAGLAYQCLSQNPKGRPLMNHVVEVLETLKDDGDAQEEVMTNLHSRGKSVTLYEASSDSQGTRDGNGQRRRRPESGRSKSEAAVDTEKYVSTLSEPDTTKI</sequence>
<reference key="1">
    <citation type="journal article" date="1999" name="Nature">
        <title>Sequence and analysis of chromosome 2 of the plant Arabidopsis thaliana.</title>
        <authorList>
            <person name="Lin X."/>
            <person name="Kaul S."/>
            <person name="Rounsley S.D."/>
            <person name="Shea T.P."/>
            <person name="Benito M.-I."/>
            <person name="Town C.D."/>
            <person name="Fujii C.Y."/>
            <person name="Mason T.M."/>
            <person name="Bowman C.L."/>
            <person name="Barnstead M.E."/>
            <person name="Feldblyum T.V."/>
            <person name="Buell C.R."/>
            <person name="Ketchum K.A."/>
            <person name="Lee J.J."/>
            <person name="Ronning C.M."/>
            <person name="Koo H.L."/>
            <person name="Moffat K.S."/>
            <person name="Cronin L.A."/>
            <person name="Shen M."/>
            <person name="Pai G."/>
            <person name="Van Aken S."/>
            <person name="Umayam L."/>
            <person name="Tallon L.J."/>
            <person name="Gill J.E."/>
            <person name="Adams M.D."/>
            <person name="Carrera A.J."/>
            <person name="Creasy T.H."/>
            <person name="Goodman H.M."/>
            <person name="Somerville C.R."/>
            <person name="Copenhaver G.P."/>
            <person name="Preuss D."/>
            <person name="Nierman W.C."/>
            <person name="White O."/>
            <person name="Eisen J.A."/>
            <person name="Salzberg S.L."/>
            <person name="Fraser C.M."/>
            <person name="Venter J.C."/>
        </authorList>
    </citation>
    <scope>NUCLEOTIDE SEQUENCE [LARGE SCALE GENOMIC DNA]</scope>
    <source>
        <strain>cv. Columbia</strain>
    </source>
</reference>
<reference key="2">
    <citation type="journal article" date="2017" name="Plant J.">
        <title>Araport11: a complete reannotation of the Arabidopsis thaliana reference genome.</title>
        <authorList>
            <person name="Cheng C.Y."/>
            <person name="Krishnakumar V."/>
            <person name="Chan A.P."/>
            <person name="Thibaud-Nissen F."/>
            <person name="Schobel S."/>
            <person name="Town C.D."/>
        </authorList>
    </citation>
    <scope>GENOME REANNOTATION</scope>
    <source>
        <strain>cv. Columbia</strain>
    </source>
</reference>
<reference key="3">
    <citation type="journal article" date="2003" name="Science">
        <title>Empirical analysis of transcriptional activity in the Arabidopsis genome.</title>
        <authorList>
            <person name="Yamada K."/>
            <person name="Lim J."/>
            <person name="Dale J.M."/>
            <person name="Chen H."/>
            <person name="Shinn P."/>
            <person name="Palm C.J."/>
            <person name="Southwick A.M."/>
            <person name="Wu H.C."/>
            <person name="Kim C.J."/>
            <person name="Nguyen M."/>
            <person name="Pham P.K."/>
            <person name="Cheuk R.F."/>
            <person name="Karlin-Newmann G."/>
            <person name="Liu S.X."/>
            <person name="Lam B."/>
            <person name="Sakano H."/>
            <person name="Wu T."/>
            <person name="Yu G."/>
            <person name="Miranda M."/>
            <person name="Quach H.L."/>
            <person name="Tripp M."/>
            <person name="Chang C.H."/>
            <person name="Lee J.M."/>
            <person name="Toriumi M.J."/>
            <person name="Chan M.M."/>
            <person name="Tang C.C."/>
            <person name="Onodera C.S."/>
            <person name="Deng J.M."/>
            <person name="Akiyama K."/>
            <person name="Ansari Y."/>
            <person name="Arakawa T."/>
            <person name="Banh J."/>
            <person name="Banno F."/>
            <person name="Bowser L."/>
            <person name="Brooks S.Y."/>
            <person name="Carninci P."/>
            <person name="Chao Q."/>
            <person name="Choy N."/>
            <person name="Enju A."/>
            <person name="Goldsmith A.D."/>
            <person name="Gurjal M."/>
            <person name="Hansen N.F."/>
            <person name="Hayashizaki Y."/>
            <person name="Johnson-Hopson C."/>
            <person name="Hsuan V.W."/>
            <person name="Iida K."/>
            <person name="Karnes M."/>
            <person name="Khan S."/>
            <person name="Koesema E."/>
            <person name="Ishida J."/>
            <person name="Jiang P.X."/>
            <person name="Jones T."/>
            <person name="Kawai J."/>
            <person name="Kamiya A."/>
            <person name="Meyers C."/>
            <person name="Nakajima M."/>
            <person name="Narusaka M."/>
            <person name="Seki M."/>
            <person name="Sakurai T."/>
            <person name="Satou M."/>
            <person name="Tamse R."/>
            <person name="Vaysberg M."/>
            <person name="Wallender E.K."/>
            <person name="Wong C."/>
            <person name="Yamamura Y."/>
            <person name="Yuan S."/>
            <person name="Shinozaki K."/>
            <person name="Davis R.W."/>
            <person name="Theologis A."/>
            <person name="Ecker J.R."/>
        </authorList>
    </citation>
    <scope>NUCLEOTIDE SEQUENCE [LARGE SCALE MRNA]</scope>
    <source>
        <strain>cv. Columbia</strain>
    </source>
</reference>
<reference key="4">
    <citation type="submission" date="2006-07" db="EMBL/GenBank/DDBJ databases">
        <title>Large-scale analysis of RIKEN Arabidopsis full-length (RAFL) cDNAs.</title>
        <authorList>
            <person name="Totoki Y."/>
            <person name="Seki M."/>
            <person name="Ishida J."/>
            <person name="Nakajima M."/>
            <person name="Enju A."/>
            <person name="Kamiya A."/>
            <person name="Narusaka M."/>
            <person name="Shin-i T."/>
            <person name="Nakagawa M."/>
            <person name="Sakamoto N."/>
            <person name="Oishi K."/>
            <person name="Kohara Y."/>
            <person name="Kobayashi M."/>
            <person name="Toyoda A."/>
            <person name="Sakaki Y."/>
            <person name="Sakurai T."/>
            <person name="Iida K."/>
            <person name="Akiyama K."/>
            <person name="Satou M."/>
            <person name="Toyoda T."/>
            <person name="Konagaya A."/>
            <person name="Carninci P."/>
            <person name="Kawai J."/>
            <person name="Hayashizaki Y."/>
            <person name="Shinozaki K."/>
        </authorList>
    </citation>
    <scope>NUCLEOTIDE SEQUENCE [LARGE SCALE MRNA]</scope>
    <source>
        <strain>cv. Columbia</strain>
    </source>
</reference>
<reference key="5">
    <citation type="journal article" date="2009" name="J. Proteomics">
        <title>Phosphoproteomic analysis of nuclei-enriched fractions from Arabidopsis thaliana.</title>
        <authorList>
            <person name="Jones A.M.E."/>
            <person name="MacLean D."/>
            <person name="Studholme D.J."/>
            <person name="Serna-Sanz A."/>
            <person name="Andreasson E."/>
            <person name="Rathjen J.P."/>
            <person name="Peck S.C."/>
        </authorList>
    </citation>
    <scope>IDENTIFICATION BY MASS SPECTROMETRY [LARGE SCALE ANALYSIS]</scope>
    <source>
        <strain>cv. Columbia</strain>
    </source>
</reference>
<reference key="6">
    <citation type="journal article" date="2010" name="Cell Host Microbe">
        <title>Receptor-like cytoplasmic kinases integrate signaling from multiple plant immune receptors and are targeted by a Pseudomonas syringae effector.</title>
        <authorList>
            <person name="Zhang J."/>
            <person name="Li W."/>
            <person name="Xiang T."/>
            <person name="Liu Z."/>
            <person name="Laluk K."/>
            <person name="Ding X."/>
            <person name="Zou Y."/>
            <person name="Gao M."/>
            <person name="Zhang X."/>
            <person name="Chen S."/>
            <person name="Mengiste T."/>
            <person name="Zhang Y."/>
            <person name="Zhou J.M."/>
        </authorList>
    </citation>
    <scope>GENE FAMILY</scope>
    <scope>NOMENCLATURE</scope>
</reference>
<feature type="initiator methionine" description="Removed" evidence="6">
    <location>
        <position position="1"/>
    </location>
</feature>
<feature type="chain" id="PRO_0000438610" description="Probable serine/threonine-protein kinase PBL17">
    <location>
        <begin position="2"/>
        <end position="442"/>
    </location>
</feature>
<feature type="domain" description="Protein kinase" evidence="3">
    <location>
        <begin position="90"/>
        <end position="370"/>
    </location>
</feature>
<feature type="region of interest" description="Disordered" evidence="4">
    <location>
        <begin position="385"/>
        <end position="442"/>
    </location>
</feature>
<feature type="compositionally biased region" description="Polar residues" evidence="4">
    <location>
        <begin position="395"/>
        <end position="406"/>
    </location>
</feature>
<feature type="compositionally biased region" description="Basic and acidic residues" evidence="4">
    <location>
        <begin position="414"/>
        <end position="429"/>
    </location>
</feature>
<feature type="compositionally biased region" description="Polar residues" evidence="4">
    <location>
        <begin position="430"/>
        <end position="442"/>
    </location>
</feature>
<feature type="active site" description="Proton acceptor" evidence="3">
    <location>
        <position position="220"/>
    </location>
</feature>
<feature type="binding site" evidence="3">
    <location>
        <begin position="96"/>
        <end position="104"/>
    </location>
    <ligand>
        <name>ATP</name>
        <dbReference type="ChEBI" id="CHEBI:30616"/>
    </ligand>
</feature>
<feature type="binding site" evidence="3">
    <location>
        <position position="125"/>
    </location>
    <ligand>
        <name>ATP</name>
        <dbReference type="ChEBI" id="CHEBI:30616"/>
    </ligand>
</feature>
<feature type="modified residue" description="Phosphothreonine" evidence="1">
    <location>
        <position position="79"/>
    </location>
</feature>
<feature type="modified residue" description="Phosphotyrosine" evidence="1">
    <location>
        <position position="170"/>
    </location>
</feature>
<feature type="modified residue" description="Phosphoserine" evidence="1">
    <location>
        <position position="254"/>
    </location>
</feature>
<feature type="modified residue" description="Phosphothreonine" evidence="1">
    <location>
        <position position="255"/>
    </location>
</feature>
<feature type="modified residue" description="Phosphothreonine" evidence="1">
    <location>
        <position position="260"/>
    </location>
</feature>
<feature type="modified residue" description="Phosphotyrosine" evidence="1">
    <location>
        <position position="268"/>
    </location>
</feature>
<feature type="lipid moiety-binding region" description="N-myristoyl glycine" evidence="2">
    <location>
        <position position="2"/>
    </location>
</feature>
<feature type="lipid moiety-binding region" description="S-palmitoyl cysteine" evidence="2">
    <location>
        <position position="4"/>
    </location>
</feature>
<feature type="sequence conflict" description="In Ref. 3; AAL87287." evidence="6" ref="3">
    <original>P</original>
    <variation>Q</variation>
    <location>
        <position position="60"/>
    </location>
</feature>
<dbReference type="EC" id="2.7.11.1" evidence="6"/>
<dbReference type="EMBL" id="AC005693">
    <property type="protein sequence ID" value="AAC69121.1"/>
    <property type="status" value="ALT_SEQ"/>
    <property type="molecule type" value="Genomic_DNA"/>
</dbReference>
<dbReference type="EMBL" id="CP002685">
    <property type="protein sequence ID" value="AEC06038.1"/>
    <property type="molecule type" value="Genomic_DNA"/>
</dbReference>
<dbReference type="EMBL" id="CP002685">
    <property type="protein sequence ID" value="AEC06039.1"/>
    <property type="molecule type" value="Genomic_DNA"/>
</dbReference>
<dbReference type="EMBL" id="AY080806">
    <property type="protein sequence ID" value="AAL87287.1"/>
    <property type="molecule type" value="mRNA"/>
</dbReference>
<dbReference type="EMBL" id="AY150474">
    <property type="protein sequence ID" value="AAN12999.1"/>
    <property type="molecule type" value="mRNA"/>
</dbReference>
<dbReference type="EMBL" id="AK226810">
    <property type="protein sequence ID" value="BAE98906.1"/>
    <property type="molecule type" value="mRNA"/>
</dbReference>
<dbReference type="PIR" id="A84483">
    <property type="entry name" value="A84483"/>
</dbReference>
<dbReference type="RefSeq" id="NP_001189514.1">
    <property type="nucleotide sequence ID" value="NM_001202585.1"/>
</dbReference>
<dbReference type="RefSeq" id="NP_178731.2">
    <property type="nucleotide sequence ID" value="NM_126690.7"/>
</dbReference>
<dbReference type="SMR" id="Q8H1E3"/>
<dbReference type="FunCoup" id="Q8H1E3">
    <property type="interactions" value="2640"/>
</dbReference>
<dbReference type="STRING" id="3702.Q8H1E3"/>
<dbReference type="iPTMnet" id="Q8H1E3"/>
<dbReference type="PaxDb" id="3702-AT2G07180.1"/>
<dbReference type="ProteomicsDB" id="236799"/>
<dbReference type="EnsemblPlants" id="AT2G07180.1">
    <property type="protein sequence ID" value="AT2G07180.1"/>
    <property type="gene ID" value="AT2G07180"/>
</dbReference>
<dbReference type="EnsemblPlants" id="AT2G07180.2">
    <property type="protein sequence ID" value="AT2G07180.2"/>
    <property type="gene ID" value="AT2G07180"/>
</dbReference>
<dbReference type="GeneID" id="815287"/>
<dbReference type="Gramene" id="AT2G07180.1">
    <property type="protein sequence ID" value="AT2G07180.1"/>
    <property type="gene ID" value="AT2G07180"/>
</dbReference>
<dbReference type="Gramene" id="AT2G07180.2">
    <property type="protein sequence ID" value="AT2G07180.2"/>
    <property type="gene ID" value="AT2G07180"/>
</dbReference>
<dbReference type="KEGG" id="ath:AT2G07180"/>
<dbReference type="Araport" id="AT2G07180"/>
<dbReference type="TAIR" id="AT2G07180">
    <property type="gene designation" value="PBL17"/>
</dbReference>
<dbReference type="eggNOG" id="KOG1187">
    <property type="taxonomic scope" value="Eukaryota"/>
</dbReference>
<dbReference type="HOGENOM" id="CLU_000288_21_2_1"/>
<dbReference type="InParanoid" id="Q8H1E3"/>
<dbReference type="OMA" id="RMDGQYG"/>
<dbReference type="PhylomeDB" id="Q8H1E3"/>
<dbReference type="PRO" id="PR:Q8H1E3"/>
<dbReference type="Proteomes" id="UP000006548">
    <property type="component" value="Chromosome 2"/>
</dbReference>
<dbReference type="ExpressionAtlas" id="Q8H1E3">
    <property type="expression patterns" value="baseline and differential"/>
</dbReference>
<dbReference type="GO" id="GO:0005886">
    <property type="term" value="C:plasma membrane"/>
    <property type="evidence" value="ECO:0007669"/>
    <property type="project" value="UniProtKB-SubCell"/>
</dbReference>
<dbReference type="GO" id="GO:0005524">
    <property type="term" value="F:ATP binding"/>
    <property type="evidence" value="ECO:0007669"/>
    <property type="project" value="UniProtKB-KW"/>
</dbReference>
<dbReference type="GO" id="GO:0106310">
    <property type="term" value="F:protein serine kinase activity"/>
    <property type="evidence" value="ECO:0007669"/>
    <property type="project" value="RHEA"/>
</dbReference>
<dbReference type="GO" id="GO:0004674">
    <property type="term" value="F:protein serine/threonine kinase activity"/>
    <property type="evidence" value="ECO:0007669"/>
    <property type="project" value="UniProtKB-KW"/>
</dbReference>
<dbReference type="GO" id="GO:0006952">
    <property type="term" value="P:defense response"/>
    <property type="evidence" value="ECO:0007669"/>
    <property type="project" value="UniProtKB-KW"/>
</dbReference>
<dbReference type="CDD" id="cd14066">
    <property type="entry name" value="STKc_IRAK"/>
    <property type="match status" value="1"/>
</dbReference>
<dbReference type="FunFam" id="3.30.200.20:FF:000228">
    <property type="entry name" value="Serine/threonine-protein kinase BIK1"/>
    <property type="match status" value="1"/>
</dbReference>
<dbReference type="FunFam" id="1.10.510.10:FF:000032">
    <property type="entry name" value="Serine/threonine-protein kinase PBS1"/>
    <property type="match status" value="1"/>
</dbReference>
<dbReference type="Gene3D" id="3.30.200.20">
    <property type="entry name" value="Phosphorylase Kinase, domain 1"/>
    <property type="match status" value="1"/>
</dbReference>
<dbReference type="Gene3D" id="1.10.510.10">
    <property type="entry name" value="Transferase(Phosphotransferase) domain 1"/>
    <property type="match status" value="1"/>
</dbReference>
<dbReference type="InterPro" id="IPR011009">
    <property type="entry name" value="Kinase-like_dom_sf"/>
</dbReference>
<dbReference type="InterPro" id="IPR050823">
    <property type="entry name" value="Plant_Ser_Thr_Prot_Kinase"/>
</dbReference>
<dbReference type="InterPro" id="IPR000719">
    <property type="entry name" value="Prot_kinase_dom"/>
</dbReference>
<dbReference type="InterPro" id="IPR017441">
    <property type="entry name" value="Protein_kinase_ATP_BS"/>
</dbReference>
<dbReference type="InterPro" id="IPR001245">
    <property type="entry name" value="Ser-Thr/Tyr_kinase_cat_dom"/>
</dbReference>
<dbReference type="InterPro" id="IPR008271">
    <property type="entry name" value="Ser/Thr_kinase_AS"/>
</dbReference>
<dbReference type="PANTHER" id="PTHR45621">
    <property type="entry name" value="OS01G0588500 PROTEIN-RELATED"/>
    <property type="match status" value="1"/>
</dbReference>
<dbReference type="Pfam" id="PF07714">
    <property type="entry name" value="PK_Tyr_Ser-Thr"/>
    <property type="match status" value="1"/>
</dbReference>
<dbReference type="SMART" id="SM00220">
    <property type="entry name" value="S_TKc"/>
    <property type="match status" value="1"/>
</dbReference>
<dbReference type="SUPFAM" id="SSF56112">
    <property type="entry name" value="Protein kinase-like (PK-like)"/>
    <property type="match status" value="1"/>
</dbReference>
<dbReference type="PROSITE" id="PS00107">
    <property type="entry name" value="PROTEIN_KINASE_ATP"/>
    <property type="match status" value="1"/>
</dbReference>
<dbReference type="PROSITE" id="PS50011">
    <property type="entry name" value="PROTEIN_KINASE_DOM"/>
    <property type="match status" value="1"/>
</dbReference>
<dbReference type="PROSITE" id="PS00108">
    <property type="entry name" value="PROTEIN_KINASE_ST"/>
    <property type="match status" value="1"/>
</dbReference>
<protein>
    <recommendedName>
        <fullName evidence="6">Probable serine/threonine-protein kinase PBL17</fullName>
        <ecNumber evidence="6">2.7.11.1</ecNumber>
    </recommendedName>
    <alternativeName>
        <fullName evidence="5">PBS1-like protein 17</fullName>
    </alternativeName>
</protein>
<name>PBL17_ARATH</name>
<accession>Q8H1E3</accession>
<accession>Q8RXM4</accession>
<accession>Q9ZV76</accession>
<keyword id="KW-0067">ATP-binding</keyword>
<keyword id="KW-1003">Cell membrane</keyword>
<keyword id="KW-0418">Kinase</keyword>
<keyword id="KW-0449">Lipoprotein</keyword>
<keyword id="KW-0472">Membrane</keyword>
<keyword id="KW-0519">Myristate</keyword>
<keyword id="KW-0547">Nucleotide-binding</keyword>
<keyword id="KW-0564">Palmitate</keyword>
<keyword id="KW-0597">Phosphoprotein</keyword>
<keyword id="KW-0611">Plant defense</keyword>
<keyword id="KW-1185">Reference proteome</keyword>
<keyword id="KW-0723">Serine/threonine-protein kinase</keyword>
<keyword id="KW-0808">Transferase</keyword>
<comment type="function">
    <text evidence="1">May be involved in plant defense signaling.</text>
</comment>
<comment type="catalytic activity">
    <reaction evidence="6">
        <text>L-seryl-[protein] + ATP = O-phospho-L-seryl-[protein] + ADP + H(+)</text>
        <dbReference type="Rhea" id="RHEA:17989"/>
        <dbReference type="Rhea" id="RHEA-COMP:9863"/>
        <dbReference type="Rhea" id="RHEA-COMP:11604"/>
        <dbReference type="ChEBI" id="CHEBI:15378"/>
        <dbReference type="ChEBI" id="CHEBI:29999"/>
        <dbReference type="ChEBI" id="CHEBI:30616"/>
        <dbReference type="ChEBI" id="CHEBI:83421"/>
        <dbReference type="ChEBI" id="CHEBI:456216"/>
        <dbReference type="EC" id="2.7.11.1"/>
    </reaction>
</comment>
<comment type="catalytic activity">
    <reaction evidence="6">
        <text>L-threonyl-[protein] + ATP = O-phospho-L-threonyl-[protein] + ADP + H(+)</text>
        <dbReference type="Rhea" id="RHEA:46608"/>
        <dbReference type="Rhea" id="RHEA-COMP:11060"/>
        <dbReference type="Rhea" id="RHEA-COMP:11605"/>
        <dbReference type="ChEBI" id="CHEBI:15378"/>
        <dbReference type="ChEBI" id="CHEBI:30013"/>
        <dbReference type="ChEBI" id="CHEBI:30616"/>
        <dbReference type="ChEBI" id="CHEBI:61977"/>
        <dbReference type="ChEBI" id="CHEBI:456216"/>
        <dbReference type="EC" id="2.7.11.1"/>
    </reaction>
</comment>
<comment type="subcellular location">
    <subcellularLocation>
        <location evidence="1">Cell membrane</location>
        <topology evidence="1">Lipid-anchor</topology>
    </subcellularLocation>
</comment>
<comment type="similarity">
    <text evidence="3">Belongs to the protein kinase superfamily. Ser/Thr protein kinase family.</text>
</comment>
<comment type="sequence caution" evidence="6">
    <conflict type="erroneous gene model prediction">
        <sequence resource="EMBL-CDS" id="AAC69121"/>
    </conflict>
</comment>
<proteinExistence type="evidence at protein level"/>
<organism>
    <name type="scientific">Arabidopsis thaliana</name>
    <name type="common">Mouse-ear cress</name>
    <dbReference type="NCBI Taxonomy" id="3702"/>
    <lineage>
        <taxon>Eukaryota</taxon>
        <taxon>Viridiplantae</taxon>
        <taxon>Streptophyta</taxon>
        <taxon>Embryophyta</taxon>
        <taxon>Tracheophyta</taxon>
        <taxon>Spermatophyta</taxon>
        <taxon>Magnoliopsida</taxon>
        <taxon>eudicotyledons</taxon>
        <taxon>Gunneridae</taxon>
        <taxon>Pentapetalae</taxon>
        <taxon>rosids</taxon>
        <taxon>malvids</taxon>
        <taxon>Brassicales</taxon>
        <taxon>Brassicaceae</taxon>
        <taxon>Camelineae</taxon>
        <taxon>Arabidopsis</taxon>
    </lineage>
</organism>